<dbReference type="EMBL" id="FM204884">
    <property type="protein sequence ID" value="CAW99501.1"/>
    <property type="molecule type" value="Genomic_DNA"/>
</dbReference>
<dbReference type="SMR" id="C0MGM0"/>
<dbReference type="KEGG" id="seq:SZO_11040"/>
<dbReference type="eggNOG" id="COG0290">
    <property type="taxonomic scope" value="Bacteria"/>
</dbReference>
<dbReference type="HOGENOM" id="CLU_054919_3_2_9"/>
<dbReference type="Proteomes" id="UP000001368">
    <property type="component" value="Chromosome"/>
</dbReference>
<dbReference type="GO" id="GO:0005829">
    <property type="term" value="C:cytosol"/>
    <property type="evidence" value="ECO:0007669"/>
    <property type="project" value="TreeGrafter"/>
</dbReference>
<dbReference type="GO" id="GO:0016020">
    <property type="term" value="C:membrane"/>
    <property type="evidence" value="ECO:0007669"/>
    <property type="project" value="TreeGrafter"/>
</dbReference>
<dbReference type="GO" id="GO:0043022">
    <property type="term" value="F:ribosome binding"/>
    <property type="evidence" value="ECO:0007669"/>
    <property type="project" value="TreeGrafter"/>
</dbReference>
<dbReference type="GO" id="GO:0003743">
    <property type="term" value="F:translation initiation factor activity"/>
    <property type="evidence" value="ECO:0007669"/>
    <property type="project" value="UniProtKB-UniRule"/>
</dbReference>
<dbReference type="GO" id="GO:0032790">
    <property type="term" value="P:ribosome disassembly"/>
    <property type="evidence" value="ECO:0007669"/>
    <property type="project" value="TreeGrafter"/>
</dbReference>
<dbReference type="FunFam" id="3.10.20.80:FF:000001">
    <property type="entry name" value="Translation initiation factor IF-3"/>
    <property type="match status" value="1"/>
</dbReference>
<dbReference type="FunFam" id="3.30.110.10:FF:000001">
    <property type="entry name" value="Translation initiation factor IF-3"/>
    <property type="match status" value="1"/>
</dbReference>
<dbReference type="Gene3D" id="3.30.110.10">
    <property type="entry name" value="Translation initiation factor 3 (IF-3), C-terminal domain"/>
    <property type="match status" value="1"/>
</dbReference>
<dbReference type="Gene3D" id="3.10.20.80">
    <property type="entry name" value="Translation initiation factor 3 (IF-3), N-terminal domain"/>
    <property type="match status" value="1"/>
</dbReference>
<dbReference type="HAMAP" id="MF_00080">
    <property type="entry name" value="IF_3"/>
    <property type="match status" value="1"/>
</dbReference>
<dbReference type="InterPro" id="IPR036788">
    <property type="entry name" value="T_IF-3_C_sf"/>
</dbReference>
<dbReference type="InterPro" id="IPR036787">
    <property type="entry name" value="T_IF-3_N_sf"/>
</dbReference>
<dbReference type="InterPro" id="IPR019813">
    <property type="entry name" value="Translation_initiation_fac3_CS"/>
</dbReference>
<dbReference type="InterPro" id="IPR001288">
    <property type="entry name" value="Translation_initiation_fac_3"/>
</dbReference>
<dbReference type="InterPro" id="IPR019815">
    <property type="entry name" value="Translation_initiation_fac_3_C"/>
</dbReference>
<dbReference type="InterPro" id="IPR019814">
    <property type="entry name" value="Translation_initiation_fac_3_N"/>
</dbReference>
<dbReference type="NCBIfam" id="TIGR00168">
    <property type="entry name" value="infC"/>
    <property type="match status" value="1"/>
</dbReference>
<dbReference type="PANTHER" id="PTHR10938">
    <property type="entry name" value="TRANSLATION INITIATION FACTOR IF-3"/>
    <property type="match status" value="1"/>
</dbReference>
<dbReference type="PANTHER" id="PTHR10938:SF0">
    <property type="entry name" value="TRANSLATION INITIATION FACTOR IF-3, MITOCHONDRIAL"/>
    <property type="match status" value="1"/>
</dbReference>
<dbReference type="Pfam" id="PF00707">
    <property type="entry name" value="IF3_C"/>
    <property type="match status" value="1"/>
</dbReference>
<dbReference type="Pfam" id="PF05198">
    <property type="entry name" value="IF3_N"/>
    <property type="match status" value="1"/>
</dbReference>
<dbReference type="SUPFAM" id="SSF55200">
    <property type="entry name" value="Translation initiation factor IF3, C-terminal domain"/>
    <property type="match status" value="1"/>
</dbReference>
<dbReference type="SUPFAM" id="SSF54364">
    <property type="entry name" value="Translation initiation factor IF3, N-terminal domain"/>
    <property type="match status" value="1"/>
</dbReference>
<dbReference type="PROSITE" id="PS00938">
    <property type="entry name" value="IF3"/>
    <property type="match status" value="1"/>
</dbReference>
<organism>
    <name type="scientific">Streptococcus equi subsp. zooepidemicus (strain H70)</name>
    <dbReference type="NCBI Taxonomy" id="553483"/>
    <lineage>
        <taxon>Bacteria</taxon>
        <taxon>Bacillati</taxon>
        <taxon>Bacillota</taxon>
        <taxon>Bacilli</taxon>
        <taxon>Lactobacillales</taxon>
        <taxon>Streptococcaceae</taxon>
        <taxon>Streptococcus</taxon>
    </lineage>
</organism>
<proteinExistence type="inferred from homology"/>
<name>IF3_STRS7</name>
<keyword id="KW-0963">Cytoplasm</keyword>
<keyword id="KW-0396">Initiation factor</keyword>
<keyword id="KW-0648">Protein biosynthesis</keyword>
<protein>
    <recommendedName>
        <fullName evidence="1">Translation initiation factor IF-3</fullName>
    </recommendedName>
</protein>
<feature type="chain" id="PRO_1000202548" description="Translation initiation factor IF-3">
    <location>
        <begin position="1"/>
        <end position="176"/>
    </location>
</feature>
<gene>
    <name evidence="1" type="primary">infC</name>
    <name type="ordered locus">SZO_11040</name>
</gene>
<comment type="function">
    <text evidence="1">IF-3 binds to the 30S ribosomal subunit and shifts the equilibrium between 70S ribosomes and their 50S and 30S subunits in favor of the free subunits, thus enhancing the availability of 30S subunits on which protein synthesis initiation begins.</text>
</comment>
<comment type="subunit">
    <text evidence="1">Monomer.</text>
</comment>
<comment type="subcellular location">
    <subcellularLocation>
        <location evidence="1">Cytoplasm</location>
    </subcellularLocation>
</comment>
<comment type="similarity">
    <text evidence="1">Belongs to the IF-3 family.</text>
</comment>
<accession>C0MGM0</accession>
<sequence length="176" mass="20038">MKIIAKKDLFINDEIRVREVRLVGLEGEQLGIKPLSEAQSLADAANVDLVLIQPQAVPPVAKLMDYGKFKFEYQKKQKEQRKKQSVVTVKEVRLSPVIDKGDFETKLRNGRKFLEKGNKVKVSIRFKGRMITHKEIGAKVLADFAEATQDIAIIEQRAKMDGRQMFMQLAPISDKK</sequence>
<reference key="1">
    <citation type="journal article" date="2009" name="PLoS Pathog.">
        <title>Genomic evidence for the evolution of Streptococcus equi: host restriction, increased virulence, and genetic exchange with human pathogens.</title>
        <authorList>
            <person name="Holden M.T.G."/>
            <person name="Heather Z."/>
            <person name="Paillot R."/>
            <person name="Steward K.F."/>
            <person name="Webb K."/>
            <person name="Ainslie F."/>
            <person name="Jourdan T."/>
            <person name="Bason N.C."/>
            <person name="Holroyd N.E."/>
            <person name="Mungall K."/>
            <person name="Quail M.A."/>
            <person name="Sanders M."/>
            <person name="Simmonds M."/>
            <person name="Willey D."/>
            <person name="Brooks K."/>
            <person name="Aanensen D.M."/>
            <person name="Spratt B.G."/>
            <person name="Jolley K.A."/>
            <person name="Maiden M.C.J."/>
            <person name="Kehoe M."/>
            <person name="Chanter N."/>
            <person name="Bentley S.D."/>
            <person name="Robinson C."/>
            <person name="Maskell D.J."/>
            <person name="Parkhill J."/>
            <person name="Waller A.S."/>
        </authorList>
    </citation>
    <scope>NUCLEOTIDE SEQUENCE [LARGE SCALE GENOMIC DNA]</scope>
    <source>
        <strain>H70</strain>
    </source>
</reference>
<evidence type="ECO:0000255" key="1">
    <source>
        <dbReference type="HAMAP-Rule" id="MF_00080"/>
    </source>
</evidence>